<feature type="chain" id="PRO_0000230694" description="Small ribosomal subunit protein uS3">
    <location>
        <begin position="1"/>
        <end position="278"/>
    </location>
</feature>
<feature type="domain" description="KH type-2" evidence="1">
    <location>
        <begin position="39"/>
        <end position="107"/>
    </location>
</feature>
<feature type="region of interest" description="Disordered" evidence="2">
    <location>
        <begin position="244"/>
        <end position="278"/>
    </location>
</feature>
<feature type="compositionally biased region" description="Basic and acidic residues" evidence="2">
    <location>
        <begin position="251"/>
        <end position="278"/>
    </location>
</feature>
<organism>
    <name type="scientific">Dehalococcoides mccartyi (strain ATCC BAA-2266 / KCTC 15142 / 195)</name>
    <name type="common">Dehalococcoides ethenogenes (strain 195)</name>
    <dbReference type="NCBI Taxonomy" id="243164"/>
    <lineage>
        <taxon>Bacteria</taxon>
        <taxon>Bacillati</taxon>
        <taxon>Chloroflexota</taxon>
        <taxon>Dehalococcoidia</taxon>
        <taxon>Dehalococcoidales</taxon>
        <taxon>Dehalococcoidaceae</taxon>
        <taxon>Dehalococcoides</taxon>
    </lineage>
</organism>
<reference key="1">
    <citation type="journal article" date="2005" name="Science">
        <title>Genome sequence of the PCE-dechlorinating bacterium Dehalococcoides ethenogenes.</title>
        <authorList>
            <person name="Seshadri R."/>
            <person name="Adrian L."/>
            <person name="Fouts D.E."/>
            <person name="Eisen J.A."/>
            <person name="Phillippy A.M."/>
            <person name="Methe B.A."/>
            <person name="Ward N.L."/>
            <person name="Nelson W.C."/>
            <person name="DeBoy R.T."/>
            <person name="Khouri H.M."/>
            <person name="Kolonay J.F."/>
            <person name="Dodson R.J."/>
            <person name="Daugherty S.C."/>
            <person name="Brinkac L.M."/>
            <person name="Sullivan S.A."/>
            <person name="Madupu R."/>
            <person name="Nelson K.E."/>
            <person name="Kang K.H."/>
            <person name="Impraim M."/>
            <person name="Tran K."/>
            <person name="Robinson J.M."/>
            <person name="Forberger H.A."/>
            <person name="Fraser C.M."/>
            <person name="Zinder S.H."/>
            <person name="Heidelberg J.F."/>
        </authorList>
    </citation>
    <scope>NUCLEOTIDE SEQUENCE [LARGE SCALE GENOMIC DNA]</scope>
    <source>
        <strain>ATCC BAA-2266 / KCTC 15142 / 195</strain>
    </source>
</reference>
<evidence type="ECO:0000255" key="1">
    <source>
        <dbReference type="HAMAP-Rule" id="MF_01309"/>
    </source>
</evidence>
<evidence type="ECO:0000256" key="2">
    <source>
        <dbReference type="SAM" id="MobiDB-lite"/>
    </source>
</evidence>
<evidence type="ECO:0000305" key="3"/>
<proteinExistence type="inferred from homology"/>
<dbReference type="EMBL" id="CP000027">
    <property type="protein sequence ID" value="AAW40177.1"/>
    <property type="molecule type" value="Genomic_DNA"/>
</dbReference>
<dbReference type="RefSeq" id="WP_010936257.1">
    <property type="nucleotide sequence ID" value="NC_002936.3"/>
</dbReference>
<dbReference type="SMR" id="Q3Z975"/>
<dbReference type="FunCoup" id="Q3Z975">
    <property type="interactions" value="407"/>
</dbReference>
<dbReference type="STRING" id="243164.DET0480"/>
<dbReference type="GeneID" id="3230141"/>
<dbReference type="KEGG" id="det:DET0480"/>
<dbReference type="PATRIC" id="fig|243164.10.peg.458"/>
<dbReference type="eggNOG" id="COG0092">
    <property type="taxonomic scope" value="Bacteria"/>
</dbReference>
<dbReference type="HOGENOM" id="CLU_058591_0_2_0"/>
<dbReference type="InParanoid" id="Q3Z975"/>
<dbReference type="Proteomes" id="UP000008289">
    <property type="component" value="Chromosome"/>
</dbReference>
<dbReference type="GO" id="GO:0022627">
    <property type="term" value="C:cytosolic small ribosomal subunit"/>
    <property type="evidence" value="ECO:0007669"/>
    <property type="project" value="TreeGrafter"/>
</dbReference>
<dbReference type="GO" id="GO:0003729">
    <property type="term" value="F:mRNA binding"/>
    <property type="evidence" value="ECO:0007669"/>
    <property type="project" value="UniProtKB-UniRule"/>
</dbReference>
<dbReference type="GO" id="GO:0019843">
    <property type="term" value="F:rRNA binding"/>
    <property type="evidence" value="ECO:0007669"/>
    <property type="project" value="UniProtKB-UniRule"/>
</dbReference>
<dbReference type="GO" id="GO:0003735">
    <property type="term" value="F:structural constituent of ribosome"/>
    <property type="evidence" value="ECO:0007669"/>
    <property type="project" value="InterPro"/>
</dbReference>
<dbReference type="GO" id="GO:0006412">
    <property type="term" value="P:translation"/>
    <property type="evidence" value="ECO:0007669"/>
    <property type="project" value="UniProtKB-UniRule"/>
</dbReference>
<dbReference type="CDD" id="cd02412">
    <property type="entry name" value="KH-II_30S_S3"/>
    <property type="match status" value="1"/>
</dbReference>
<dbReference type="FunFam" id="3.30.300.20:FF:000001">
    <property type="entry name" value="30S ribosomal protein S3"/>
    <property type="match status" value="1"/>
</dbReference>
<dbReference type="Gene3D" id="3.30.300.20">
    <property type="match status" value="1"/>
</dbReference>
<dbReference type="Gene3D" id="3.30.1140.32">
    <property type="entry name" value="Ribosomal protein S3, C-terminal domain"/>
    <property type="match status" value="1"/>
</dbReference>
<dbReference type="HAMAP" id="MF_01309_B">
    <property type="entry name" value="Ribosomal_uS3_B"/>
    <property type="match status" value="1"/>
</dbReference>
<dbReference type="InterPro" id="IPR004087">
    <property type="entry name" value="KH_dom"/>
</dbReference>
<dbReference type="InterPro" id="IPR015946">
    <property type="entry name" value="KH_dom-like_a/b"/>
</dbReference>
<dbReference type="InterPro" id="IPR004044">
    <property type="entry name" value="KH_dom_type_2"/>
</dbReference>
<dbReference type="InterPro" id="IPR009019">
    <property type="entry name" value="KH_sf_prok-type"/>
</dbReference>
<dbReference type="InterPro" id="IPR036419">
    <property type="entry name" value="Ribosomal_S3_C_sf"/>
</dbReference>
<dbReference type="InterPro" id="IPR005704">
    <property type="entry name" value="Ribosomal_uS3_bac-typ"/>
</dbReference>
<dbReference type="InterPro" id="IPR001351">
    <property type="entry name" value="Ribosomal_uS3_C"/>
</dbReference>
<dbReference type="InterPro" id="IPR018280">
    <property type="entry name" value="Ribosomal_uS3_CS"/>
</dbReference>
<dbReference type="NCBIfam" id="TIGR01009">
    <property type="entry name" value="rpsC_bact"/>
    <property type="match status" value="1"/>
</dbReference>
<dbReference type="PANTHER" id="PTHR11760">
    <property type="entry name" value="30S/40S RIBOSOMAL PROTEIN S3"/>
    <property type="match status" value="1"/>
</dbReference>
<dbReference type="PANTHER" id="PTHR11760:SF19">
    <property type="entry name" value="SMALL RIBOSOMAL SUBUNIT PROTEIN US3C"/>
    <property type="match status" value="1"/>
</dbReference>
<dbReference type="Pfam" id="PF07650">
    <property type="entry name" value="KH_2"/>
    <property type="match status" value="1"/>
</dbReference>
<dbReference type="Pfam" id="PF00189">
    <property type="entry name" value="Ribosomal_S3_C"/>
    <property type="match status" value="1"/>
</dbReference>
<dbReference type="SMART" id="SM00322">
    <property type="entry name" value="KH"/>
    <property type="match status" value="1"/>
</dbReference>
<dbReference type="SUPFAM" id="SSF54814">
    <property type="entry name" value="Prokaryotic type KH domain (KH-domain type II)"/>
    <property type="match status" value="1"/>
</dbReference>
<dbReference type="SUPFAM" id="SSF54821">
    <property type="entry name" value="Ribosomal protein S3 C-terminal domain"/>
    <property type="match status" value="1"/>
</dbReference>
<dbReference type="PROSITE" id="PS50823">
    <property type="entry name" value="KH_TYPE_2"/>
    <property type="match status" value="1"/>
</dbReference>
<dbReference type="PROSITE" id="PS00548">
    <property type="entry name" value="RIBOSOMAL_S3"/>
    <property type="match status" value="1"/>
</dbReference>
<protein>
    <recommendedName>
        <fullName evidence="1">Small ribosomal subunit protein uS3</fullName>
    </recommendedName>
    <alternativeName>
        <fullName evidence="3">30S ribosomal protein S3</fullName>
    </alternativeName>
</protein>
<keyword id="KW-0687">Ribonucleoprotein</keyword>
<keyword id="KW-0689">Ribosomal protein</keyword>
<keyword id="KW-0694">RNA-binding</keyword>
<keyword id="KW-0699">rRNA-binding</keyword>
<sequence>MGRKVHPIGFRLGIIKDWSAKWHASDKGFAECLTEDLKLRKAIAKKYVDAAISQVDIERQSNKVTVSVRTARPGIVIGRGGQRVDEMRHFLEELIGKKVQLNIVEISQAELDAFLVARSVAEQIERRVAYRRAMKQAIFRSMQAGAKGIKVCASGRLGGVEIARREVMHEGRVPLHTLRADIDYGCTRAHTALGDIGIKVWVYRGDILPEAKEQSEPEVTEMAAVMADAPAAAVAEAKVADTVAKPKRVTKKAEAEASAEEKPKRAAKKAENITKEEE</sequence>
<accession>Q3Z975</accession>
<comment type="function">
    <text evidence="1">Binds the lower part of the 30S subunit head. Binds mRNA in the 70S ribosome, positioning it for translation.</text>
</comment>
<comment type="subunit">
    <text evidence="1">Part of the 30S ribosomal subunit. Forms a tight complex with proteins S10 and S14.</text>
</comment>
<comment type="similarity">
    <text evidence="1">Belongs to the universal ribosomal protein uS3 family.</text>
</comment>
<gene>
    <name evidence="1" type="primary">rpsC</name>
    <name type="ordered locus">DET0480</name>
</gene>
<name>RS3_DEHM1</name>